<protein>
    <recommendedName>
        <fullName evidence="1">Probable 5-dehydro-4-deoxyglucarate dehydratase</fullName>
        <ecNumber evidence="1">4.2.1.41</ecNumber>
    </recommendedName>
    <alternativeName>
        <fullName evidence="1">5-keto-4-deoxy-glucarate dehydratase</fullName>
        <shortName evidence="1">KDGDH</shortName>
    </alternativeName>
</protein>
<sequence length="303" mass="32723">MNPQELKSILSSGLLSFPVTDFNAQGDFHRAGYIKRLEWLAPYGASALFAAGGTGEFFSLAASEYSEIIKTAVDTCATSVPILAGVGGPTRQAIEYAQEAERLGAKGLLLLPHYLTEASQDGVAAHVEAVCKAVKIGVVVYNRNVCRLTPTLLEQLAERCPNLIGYKDGLGDIELMVSIRRRLGDRFSYLGGLPTAEVYAAAYKALGVPVYSSAVFNFVPKLAMDFYHAIARDDHEAVGKYIDDFFLPYLEIRNRKAGYAVSIVKAGAKIAGYDAGPVRAPLTDLTPDECDMLAALMDKQGKQ</sequence>
<proteinExistence type="inferred from homology"/>
<evidence type="ECO:0000255" key="1">
    <source>
        <dbReference type="HAMAP-Rule" id="MF_00694"/>
    </source>
</evidence>
<gene>
    <name type="ordered locus">PSPPH_4252</name>
</gene>
<comment type="catalytic activity">
    <reaction evidence="1">
        <text>5-dehydro-4-deoxy-D-glucarate + H(+) = 2,5-dioxopentanoate + CO2 + H2O</text>
        <dbReference type="Rhea" id="RHEA:24608"/>
        <dbReference type="ChEBI" id="CHEBI:15377"/>
        <dbReference type="ChEBI" id="CHEBI:15378"/>
        <dbReference type="ChEBI" id="CHEBI:16526"/>
        <dbReference type="ChEBI" id="CHEBI:42819"/>
        <dbReference type="ChEBI" id="CHEBI:58136"/>
        <dbReference type="EC" id="4.2.1.41"/>
    </reaction>
</comment>
<comment type="pathway">
    <text evidence="1">Carbohydrate acid metabolism; D-glucarate degradation; 2,5-dioxopentanoate from D-glucarate: step 2/2.</text>
</comment>
<comment type="similarity">
    <text evidence="1">Belongs to the DapA family.</text>
</comment>
<reference key="1">
    <citation type="journal article" date="2005" name="J. Bacteriol.">
        <title>Whole-genome sequence analysis of Pseudomonas syringae pv. phaseolicola 1448A reveals divergence among pathovars in genes involved in virulence and transposition.</title>
        <authorList>
            <person name="Joardar V."/>
            <person name="Lindeberg M."/>
            <person name="Jackson R.W."/>
            <person name="Selengut J."/>
            <person name="Dodson R."/>
            <person name="Brinkac L.M."/>
            <person name="Daugherty S.C."/>
            <person name="DeBoy R.T."/>
            <person name="Durkin A.S."/>
            <person name="Gwinn Giglio M."/>
            <person name="Madupu R."/>
            <person name="Nelson W.C."/>
            <person name="Rosovitz M.J."/>
            <person name="Sullivan S.A."/>
            <person name="Crabtree J."/>
            <person name="Creasy T."/>
            <person name="Davidsen T.M."/>
            <person name="Haft D.H."/>
            <person name="Zafar N."/>
            <person name="Zhou L."/>
            <person name="Halpin R."/>
            <person name="Holley T."/>
            <person name="Khouri H.M."/>
            <person name="Feldblyum T.V."/>
            <person name="White O."/>
            <person name="Fraser C.M."/>
            <person name="Chatterjee A.K."/>
            <person name="Cartinhour S."/>
            <person name="Schneider D."/>
            <person name="Mansfield J.W."/>
            <person name="Collmer A."/>
            <person name="Buell R."/>
        </authorList>
    </citation>
    <scope>NUCLEOTIDE SEQUENCE [LARGE SCALE GENOMIC DNA]</scope>
    <source>
        <strain>1448A / Race 6</strain>
    </source>
</reference>
<feature type="chain" id="PRO_1000045406" description="Probable 5-dehydro-4-deoxyglucarate dehydratase">
    <location>
        <begin position="1"/>
        <end position="303"/>
    </location>
</feature>
<dbReference type="EC" id="4.2.1.41" evidence="1"/>
<dbReference type="EMBL" id="CP000058">
    <property type="protein sequence ID" value="AAZ34628.1"/>
    <property type="molecule type" value="Genomic_DNA"/>
</dbReference>
<dbReference type="SMR" id="Q48E20"/>
<dbReference type="KEGG" id="psp:PSPPH_4252"/>
<dbReference type="eggNOG" id="COG0329">
    <property type="taxonomic scope" value="Bacteria"/>
</dbReference>
<dbReference type="HOGENOM" id="CLU_049343_5_2_6"/>
<dbReference type="UniPathway" id="UPA00564">
    <property type="reaction ID" value="UER00628"/>
</dbReference>
<dbReference type="Proteomes" id="UP000000551">
    <property type="component" value="Chromosome"/>
</dbReference>
<dbReference type="GO" id="GO:0008840">
    <property type="term" value="F:4-hydroxy-tetrahydrodipicolinate synthase activity"/>
    <property type="evidence" value="ECO:0007669"/>
    <property type="project" value="TreeGrafter"/>
</dbReference>
<dbReference type="GO" id="GO:0047448">
    <property type="term" value="F:5-dehydro-4-deoxyglucarate dehydratase activity"/>
    <property type="evidence" value="ECO:0007669"/>
    <property type="project" value="UniProtKB-UniRule"/>
</dbReference>
<dbReference type="GO" id="GO:0042838">
    <property type="term" value="P:D-glucarate catabolic process"/>
    <property type="evidence" value="ECO:0007669"/>
    <property type="project" value="UniProtKB-UniRule"/>
</dbReference>
<dbReference type="CDD" id="cd00951">
    <property type="entry name" value="KDGDH"/>
    <property type="match status" value="1"/>
</dbReference>
<dbReference type="Gene3D" id="3.20.20.70">
    <property type="entry name" value="Aldolase class I"/>
    <property type="match status" value="1"/>
</dbReference>
<dbReference type="HAMAP" id="MF_00694">
    <property type="entry name" value="KDGDH"/>
    <property type="match status" value="1"/>
</dbReference>
<dbReference type="InterPro" id="IPR013785">
    <property type="entry name" value="Aldolase_TIM"/>
</dbReference>
<dbReference type="InterPro" id="IPR002220">
    <property type="entry name" value="DapA-like"/>
</dbReference>
<dbReference type="InterPro" id="IPR017655">
    <property type="entry name" value="Dehydro-deoxyglucarate_dehyd"/>
</dbReference>
<dbReference type="NCBIfam" id="TIGR03249">
    <property type="entry name" value="KdgD"/>
    <property type="match status" value="1"/>
</dbReference>
<dbReference type="NCBIfam" id="NF002958">
    <property type="entry name" value="PRK03620.1"/>
    <property type="match status" value="1"/>
</dbReference>
<dbReference type="PANTHER" id="PTHR12128:SF19">
    <property type="entry name" value="5-DEHYDRO-4-DEOXYGLUCARATE DEHYDRATASE 2-RELATED"/>
    <property type="match status" value="1"/>
</dbReference>
<dbReference type="PANTHER" id="PTHR12128">
    <property type="entry name" value="DIHYDRODIPICOLINATE SYNTHASE"/>
    <property type="match status" value="1"/>
</dbReference>
<dbReference type="Pfam" id="PF00701">
    <property type="entry name" value="DHDPS"/>
    <property type="match status" value="1"/>
</dbReference>
<dbReference type="PIRSF" id="PIRSF001365">
    <property type="entry name" value="DHDPS"/>
    <property type="match status" value="1"/>
</dbReference>
<dbReference type="SMART" id="SM01130">
    <property type="entry name" value="DHDPS"/>
    <property type="match status" value="1"/>
</dbReference>
<dbReference type="SUPFAM" id="SSF51569">
    <property type="entry name" value="Aldolase"/>
    <property type="match status" value="1"/>
</dbReference>
<accession>Q48E20</accession>
<name>KDGD_PSE14</name>
<keyword id="KW-0456">Lyase</keyword>
<organism>
    <name type="scientific">Pseudomonas savastanoi pv. phaseolicola (strain 1448A / Race 6)</name>
    <name type="common">Pseudomonas syringae pv. phaseolicola (strain 1448A / Race 6)</name>
    <dbReference type="NCBI Taxonomy" id="264730"/>
    <lineage>
        <taxon>Bacteria</taxon>
        <taxon>Pseudomonadati</taxon>
        <taxon>Pseudomonadota</taxon>
        <taxon>Gammaproteobacteria</taxon>
        <taxon>Pseudomonadales</taxon>
        <taxon>Pseudomonadaceae</taxon>
        <taxon>Pseudomonas</taxon>
    </lineage>
</organism>